<sequence length="852" mass="94880">MFFACYCALRTNVKKYRYQDEDGPHDHSLPRLTHEVRGPELVHVSEKNLSQIENVHGYVLQSHISPLKASPAPIIVNTDTLDTIPYVNGTEIEYEFEEITLERGNSGLGFSIAGGTDNPHIGDDPGIFITKIIPGGAAAEDGRLRVNDCILRVNEVDVSEVSHSKAVEALKEAGSIVRLYVRRRRPILETVVEIKLFKGPKGLGFSIAGGVGNQHIPGDNSIYVTKIIDGGAAQKDGRLQVGDRLLMVNNYSLEEVTHEEAVAILKNTSDVVYLKVGKPTTIYMTDPYGPPDITHSYSPPMENHLLSGNNGTLEYKTSLPPISPGRYSPIPKHMLGEDDYTRPPEPVYSTVNKLCDKPASPRHYSPVECDKSFLLSTPYPHYHLGLLPDSDMTSHSQHSTATRQPSVTLQRAISLEGEPRKVVLHKGSTGLGFNIVGGEDGEGIFVSFILAGGPADLSGELQRGDQILSVNGIDLRGASHEQAAAALKGAGQTVTIIAQYQPEDYARFEAKIHDLREQMMNHSMSSGSGSLRTNQKRSLYVRAMFDYDKSKDSGLPSQGLSFKYGDILHVINASDDEWWQARRVTLDGDSEEMGVIPSKRRVERKERARLKTVKFNAKPGVIDSKGDIPGLGDDGYGTKTLRGQEDLILSYEPVTRQEINYTRPVIILGPMKDRINDDLISEFPDKFGSCVPHTTRPKRDYEVDGRDYHFVISREQMEKDIQEHKFIEAGQYNDNLYGTSVQSVRFVAERGKHCILDVSGNAIKRLQVAQLYPIAIFIKPKSLEPLMEMNKRLTEEQAKKTYDRAIKLEQEFGEYFTAIVQGDTLEDIYNQCKLVIEEQSGPFIWIPSKEKL</sequence>
<keyword id="KW-0002">3D-structure</keyword>
<keyword id="KW-0025">Alternative splicing</keyword>
<keyword id="KW-1003">Cell membrane</keyword>
<keyword id="KW-0966">Cell projection</keyword>
<keyword id="KW-0449">Lipoprotein</keyword>
<keyword id="KW-0472">Membrane</keyword>
<keyword id="KW-0564">Palmitate</keyword>
<keyword id="KW-0597">Phosphoprotein</keyword>
<keyword id="KW-1185">Reference proteome</keyword>
<keyword id="KW-0677">Repeat</keyword>
<keyword id="KW-0728">SH3 domain</keyword>
<keyword id="KW-0770">Synapse</keyword>
<organism>
    <name type="scientific">Mus musculus</name>
    <name type="common">Mouse</name>
    <dbReference type="NCBI Taxonomy" id="10090"/>
    <lineage>
        <taxon>Eukaryota</taxon>
        <taxon>Metazoa</taxon>
        <taxon>Chordata</taxon>
        <taxon>Craniata</taxon>
        <taxon>Vertebrata</taxon>
        <taxon>Euteleostomi</taxon>
        <taxon>Mammalia</taxon>
        <taxon>Eutheria</taxon>
        <taxon>Euarchontoglires</taxon>
        <taxon>Glires</taxon>
        <taxon>Rodentia</taxon>
        <taxon>Myomorpha</taxon>
        <taxon>Muroidea</taxon>
        <taxon>Muridae</taxon>
        <taxon>Murinae</taxon>
        <taxon>Mus</taxon>
        <taxon>Mus</taxon>
    </lineage>
</organism>
<comment type="function">
    <text evidence="8">Required for perception of chronic pain through NMDA receptor signaling. Regulates surface expression of NMDA receptors in dorsal horn neurons of the spinal cord. Interacts with the cytoplasmic tail of NMDA receptor subunits as well as inward rectifying potassium channels. Involved in regulation of synaptic stability at cholinergic synapses. Part of the postsynaptic protein scaffold of excitatory synapses.</text>
</comment>
<comment type="subunit">
    <text evidence="2 3 7 10 11">Interacts with NOS1/nNOS through second PDZ domain. Interacts with KCNJ2/Kir2.1 (via C-terminus) through one of its PDZ domains (By similarity). Interacts with KCNJ4 (PubMed:11997254). Interacts with FRMPD4 (via C-terminus) (By similarity). Interacts through its PDZ domains with NETO1 (PubMed:19243221). Interacts with LRFN1, LRFN2 and LRFN4. Interacts with FASLG (By similarity). Interacts with KCNJ4 (By similarity). Interacts with ADAM22 (PubMed:20089912). Interacts with DGKI (via PDZ-binding motif) (By similarity).</text>
</comment>
<comment type="interaction">
    <interactant intactId="EBI-400138">
        <id>Q91XM9</id>
    </interactant>
    <interactant intactId="EBI-300895">
        <id>Q62108</id>
        <label>Dlg4</label>
    </interactant>
    <organismsDiffer>false</organismsDiffer>
    <experiments>6</experiments>
</comment>
<comment type="interaction">
    <interactant intactId="EBI-400138">
        <id>Q91XM9</id>
    </interactant>
    <interactant intactId="EBI-771450">
        <id>Q4ACU6</id>
        <label>Shank3</label>
    </interactant>
    <organismsDiffer>false</organismsDiffer>
    <experiments>4</experiments>
</comment>
<comment type="subcellular location">
    <subcellularLocation>
        <location evidence="14">Cell membrane</location>
        <topology evidence="3">Lipid-anchor</topology>
    </subcellularLocation>
    <subcellularLocation>
        <location evidence="3">Postsynaptic density</location>
    </subcellularLocation>
    <subcellularLocation>
        <location evidence="1">Synapse</location>
    </subcellularLocation>
    <subcellularLocation>
        <location evidence="3">Membrane</location>
    </subcellularLocation>
    <subcellularLocation>
        <location evidence="3">Cell projection</location>
        <location evidence="3">Axon</location>
    </subcellularLocation>
    <subcellularLocation>
        <location evidence="3">Perikaryon</location>
    </subcellularLocation>
    <text evidence="3">Concentrated in soma and postsynaptic density of a subset of neurons.</text>
</comment>
<comment type="alternative products">
    <event type="alternative splicing"/>
    <isoform>
        <id>Q91XM9-1</id>
        <name>1</name>
        <name>PSD93-alpha</name>
        <sequence type="displayed"/>
    </isoform>
    <isoform>
        <id>Q91XM9-2</id>
        <name>2</name>
        <name>PSD93-beta</name>
        <sequence type="described" ref="VSP_015520"/>
    </isoform>
    <isoform>
        <id>Q91XM9-3</id>
        <name>3</name>
        <name>PSD93-gamma</name>
        <sequence type="described" ref="VSP_015517 VSP_015522"/>
    </isoform>
    <isoform>
        <id>Q91XM9-4</id>
        <name>4</name>
        <name>PSD93-delta</name>
        <sequence type="described" ref="VSP_012869"/>
    </isoform>
    <isoform>
        <id>Q91XM9-5</id>
        <name>5</name>
        <sequence type="described" ref="VSP_012869 VSP_012870 VSP_012871"/>
    </isoform>
    <isoform>
        <id>Q91XM9-6</id>
        <name>6</name>
        <name>PSD93 epsilon</name>
        <sequence type="described" ref="VSP_015518 VSP_015521"/>
    </isoform>
    <isoform>
        <id>Q91XM9-7</id>
        <name>7</name>
        <name>PSD93 zeta</name>
        <sequence type="described" ref="VSP_015519 VSP_015523"/>
    </isoform>
    <isoform>
        <id>Q91XM9-8</id>
        <name>8</name>
        <sequence type="described" ref="VSP_015524"/>
    </isoform>
</comment>
<comment type="tissue specificity">
    <text evidence="8 9">Brain. Highest levels of isoform 1 in cortex, olfactory bulb, thalamus, hypothalamus, striatum and hippocampus. Highest level of isoform 2 in olfactory bulb. Reduced levels in cortex and hippocampus. Highest level of isoform 4 in spinal cord. Low levels of isoform 4, isoform 6, and isoform 7 in superior cervical ganglion.</text>
</comment>
<comment type="domain">
    <text>Isoform 7 has an L27 domain close to N-terminus.</text>
</comment>
<comment type="PTM">
    <text evidence="1">Palmitoylation of isoform 1 and isoform 2 is not required for targeting to postsynaptic density.</text>
</comment>
<comment type="disruption phenotype">
    <text evidence="8">Mice do not respond to persistent pain. Postsynaptic surface expression of NMDA receptors and NMDA receptor-mediated synaptic function are reduced in dorsal horn neurons of the spinal cord.</text>
</comment>
<comment type="miscellaneous">
    <molecule>Isoform 8</molecule>
    <text evidence="13">Incomplete sequence.</text>
</comment>
<gene>
    <name type="primary">Dlg2</name>
    <name type="synonym">Dlgh2</name>
</gene>
<name>DLG2_MOUSE</name>
<protein>
    <recommendedName>
        <fullName>Disks large homolog 2</fullName>
    </recommendedName>
    <alternativeName>
        <fullName>Channel-associated protein of synapse-110</fullName>
        <shortName>Chapsyn-110</shortName>
    </alternativeName>
    <alternativeName>
        <fullName>Postsynaptic density protein PSD-93</fullName>
    </alternativeName>
</protein>
<proteinExistence type="evidence at protein level"/>
<reference key="1">
    <citation type="submission" date="2001-06" db="EMBL/GenBank/DDBJ databases">
        <title>Cloning and sequencing of mouse PSD-93 cDNA.</title>
        <authorList>
            <person name="Yamashita T."/>
            <person name="Mochizuki C."/>
            <person name="Miyagi Y."/>
            <person name="Sonoda T."/>
            <person name="Kawamoto S."/>
        </authorList>
    </citation>
    <scope>NUCLEOTIDE SEQUENCE [MRNA] (ISOFORM 1)</scope>
    <source>
        <strain>BALB/cJ</strain>
        <tissue>Cerebellum</tissue>
    </source>
</reference>
<reference key="2">
    <citation type="journal article" date="2005" name="Science">
        <title>The transcriptional landscape of the mammalian genome.</title>
        <authorList>
            <person name="Carninci P."/>
            <person name="Kasukawa T."/>
            <person name="Katayama S."/>
            <person name="Gough J."/>
            <person name="Frith M.C."/>
            <person name="Maeda N."/>
            <person name="Oyama R."/>
            <person name="Ravasi T."/>
            <person name="Lenhard B."/>
            <person name="Wells C."/>
            <person name="Kodzius R."/>
            <person name="Shimokawa K."/>
            <person name="Bajic V.B."/>
            <person name="Brenner S.E."/>
            <person name="Batalov S."/>
            <person name="Forrest A.R."/>
            <person name="Zavolan M."/>
            <person name="Davis M.J."/>
            <person name="Wilming L.G."/>
            <person name="Aidinis V."/>
            <person name="Allen J.E."/>
            <person name="Ambesi-Impiombato A."/>
            <person name="Apweiler R."/>
            <person name="Aturaliya R.N."/>
            <person name="Bailey T.L."/>
            <person name="Bansal M."/>
            <person name="Baxter L."/>
            <person name="Beisel K.W."/>
            <person name="Bersano T."/>
            <person name="Bono H."/>
            <person name="Chalk A.M."/>
            <person name="Chiu K.P."/>
            <person name="Choudhary V."/>
            <person name="Christoffels A."/>
            <person name="Clutterbuck D.R."/>
            <person name="Crowe M.L."/>
            <person name="Dalla E."/>
            <person name="Dalrymple B.P."/>
            <person name="de Bono B."/>
            <person name="Della Gatta G."/>
            <person name="di Bernardo D."/>
            <person name="Down T."/>
            <person name="Engstrom P."/>
            <person name="Fagiolini M."/>
            <person name="Faulkner G."/>
            <person name="Fletcher C.F."/>
            <person name="Fukushima T."/>
            <person name="Furuno M."/>
            <person name="Futaki S."/>
            <person name="Gariboldi M."/>
            <person name="Georgii-Hemming P."/>
            <person name="Gingeras T.R."/>
            <person name="Gojobori T."/>
            <person name="Green R.E."/>
            <person name="Gustincich S."/>
            <person name="Harbers M."/>
            <person name="Hayashi Y."/>
            <person name="Hensch T.K."/>
            <person name="Hirokawa N."/>
            <person name="Hill D."/>
            <person name="Huminiecki L."/>
            <person name="Iacono M."/>
            <person name="Ikeo K."/>
            <person name="Iwama A."/>
            <person name="Ishikawa T."/>
            <person name="Jakt M."/>
            <person name="Kanapin A."/>
            <person name="Katoh M."/>
            <person name="Kawasawa Y."/>
            <person name="Kelso J."/>
            <person name="Kitamura H."/>
            <person name="Kitano H."/>
            <person name="Kollias G."/>
            <person name="Krishnan S.P."/>
            <person name="Kruger A."/>
            <person name="Kummerfeld S.K."/>
            <person name="Kurochkin I.V."/>
            <person name="Lareau L.F."/>
            <person name="Lazarevic D."/>
            <person name="Lipovich L."/>
            <person name="Liu J."/>
            <person name="Liuni S."/>
            <person name="McWilliam S."/>
            <person name="Madan Babu M."/>
            <person name="Madera M."/>
            <person name="Marchionni L."/>
            <person name="Matsuda H."/>
            <person name="Matsuzawa S."/>
            <person name="Miki H."/>
            <person name="Mignone F."/>
            <person name="Miyake S."/>
            <person name="Morris K."/>
            <person name="Mottagui-Tabar S."/>
            <person name="Mulder N."/>
            <person name="Nakano N."/>
            <person name="Nakauchi H."/>
            <person name="Ng P."/>
            <person name="Nilsson R."/>
            <person name="Nishiguchi S."/>
            <person name="Nishikawa S."/>
            <person name="Nori F."/>
            <person name="Ohara O."/>
            <person name="Okazaki Y."/>
            <person name="Orlando V."/>
            <person name="Pang K.C."/>
            <person name="Pavan W.J."/>
            <person name="Pavesi G."/>
            <person name="Pesole G."/>
            <person name="Petrovsky N."/>
            <person name="Piazza S."/>
            <person name="Reed J."/>
            <person name="Reid J.F."/>
            <person name="Ring B.Z."/>
            <person name="Ringwald M."/>
            <person name="Rost B."/>
            <person name="Ruan Y."/>
            <person name="Salzberg S.L."/>
            <person name="Sandelin A."/>
            <person name="Schneider C."/>
            <person name="Schoenbach C."/>
            <person name="Sekiguchi K."/>
            <person name="Semple C.A."/>
            <person name="Seno S."/>
            <person name="Sessa L."/>
            <person name="Sheng Y."/>
            <person name="Shibata Y."/>
            <person name="Shimada H."/>
            <person name="Shimada K."/>
            <person name="Silva D."/>
            <person name="Sinclair B."/>
            <person name="Sperling S."/>
            <person name="Stupka E."/>
            <person name="Sugiura K."/>
            <person name="Sultana R."/>
            <person name="Takenaka Y."/>
            <person name="Taki K."/>
            <person name="Tammoja K."/>
            <person name="Tan S.L."/>
            <person name="Tang S."/>
            <person name="Taylor M.S."/>
            <person name="Tegner J."/>
            <person name="Teichmann S.A."/>
            <person name="Ueda H.R."/>
            <person name="van Nimwegen E."/>
            <person name="Verardo R."/>
            <person name="Wei C.L."/>
            <person name="Yagi K."/>
            <person name="Yamanishi H."/>
            <person name="Zabarovsky E."/>
            <person name="Zhu S."/>
            <person name="Zimmer A."/>
            <person name="Hide W."/>
            <person name="Bult C."/>
            <person name="Grimmond S.M."/>
            <person name="Teasdale R.D."/>
            <person name="Liu E.T."/>
            <person name="Brusic V."/>
            <person name="Quackenbush J."/>
            <person name="Wahlestedt C."/>
            <person name="Mattick J.S."/>
            <person name="Hume D.A."/>
            <person name="Kai C."/>
            <person name="Sasaki D."/>
            <person name="Tomaru Y."/>
            <person name="Fukuda S."/>
            <person name="Kanamori-Katayama M."/>
            <person name="Suzuki M."/>
            <person name="Aoki J."/>
            <person name="Arakawa T."/>
            <person name="Iida J."/>
            <person name="Imamura K."/>
            <person name="Itoh M."/>
            <person name="Kato T."/>
            <person name="Kawaji H."/>
            <person name="Kawagashira N."/>
            <person name="Kawashima T."/>
            <person name="Kojima M."/>
            <person name="Kondo S."/>
            <person name="Konno H."/>
            <person name="Nakano K."/>
            <person name="Ninomiya N."/>
            <person name="Nishio T."/>
            <person name="Okada M."/>
            <person name="Plessy C."/>
            <person name="Shibata K."/>
            <person name="Shiraki T."/>
            <person name="Suzuki S."/>
            <person name="Tagami M."/>
            <person name="Waki K."/>
            <person name="Watahiki A."/>
            <person name="Okamura-Oho Y."/>
            <person name="Suzuki H."/>
            <person name="Kawai J."/>
            <person name="Hayashizaki Y."/>
        </authorList>
    </citation>
    <scope>NUCLEOTIDE SEQUENCE [LARGE SCALE MRNA] (ISOFORM 5)</scope>
    <scope>NUCLEOTIDE SEQUENCE [LARGE SCALE MRNA] OF 465-852 (ISOFORM 8)</scope>
    <source>
        <strain>C57BL/6J</strain>
        <tissue>Adrenal gland</tissue>
        <tissue>Spinal cord</tissue>
    </source>
</reference>
<reference key="3">
    <citation type="journal article" date="2009" name="PLoS Biol.">
        <title>Lineage-specific biology revealed by a finished genome assembly of the mouse.</title>
        <authorList>
            <person name="Church D.M."/>
            <person name="Goodstadt L."/>
            <person name="Hillier L.W."/>
            <person name="Zody M.C."/>
            <person name="Goldstein S."/>
            <person name="She X."/>
            <person name="Bult C.J."/>
            <person name="Agarwala R."/>
            <person name="Cherry J.L."/>
            <person name="DiCuccio M."/>
            <person name="Hlavina W."/>
            <person name="Kapustin Y."/>
            <person name="Meric P."/>
            <person name="Maglott D."/>
            <person name="Birtle Z."/>
            <person name="Marques A.C."/>
            <person name="Graves T."/>
            <person name="Zhou S."/>
            <person name="Teague B."/>
            <person name="Potamousis K."/>
            <person name="Churas C."/>
            <person name="Place M."/>
            <person name="Herschleb J."/>
            <person name="Runnheim R."/>
            <person name="Forrest D."/>
            <person name="Amos-Landgraf J."/>
            <person name="Schwartz D.C."/>
            <person name="Cheng Z."/>
            <person name="Lindblad-Toh K."/>
            <person name="Eichler E.E."/>
            <person name="Ponting C.P."/>
        </authorList>
    </citation>
    <scope>NUCLEOTIDE SEQUENCE [LARGE SCALE GENOMIC DNA]</scope>
    <source>
        <strain>C57BL/6J</strain>
    </source>
</reference>
<reference key="4">
    <citation type="journal article" date="2002" name="Am. J. Physiol.">
        <title>Inward rectifier K+ channel Kir2.3 is localized at the postsynaptic membrane of excitatory synapses.</title>
        <authorList>
            <person name="Inanobe A."/>
            <person name="Fujita A."/>
            <person name="Ito M."/>
            <person name="Tomoike H."/>
            <person name="Inageda K."/>
            <person name="Kurachi Y."/>
        </authorList>
    </citation>
    <scope>INTERACTION WITH KCNJ4</scope>
</reference>
<reference key="5">
    <citation type="journal article" date="2003" name="J. Neurosci.">
        <title>Impaired NMDA receptor-mediated postsynaptic function and blunted NMDA receptor-dependent persistent pain in mice lacking postsynaptic density-93 protein.</title>
        <authorList>
            <person name="Tao Y.-X."/>
            <person name="Rumbaugh G."/>
            <person name="Wang G.-D."/>
            <person name="Petralia R.S."/>
            <person name="Zhao C."/>
            <person name="Kauer F.W."/>
            <person name="Tao F."/>
            <person name="Zhuo M."/>
            <person name="Wenthold R.J."/>
            <person name="Raja S.N."/>
            <person name="Huganir R.L."/>
            <person name="Bredt D.S."/>
            <person name="Johns R.A."/>
        </authorList>
    </citation>
    <scope>FUNCTION</scope>
    <scope>TISSUE SPECIFICITY</scope>
    <scope>DISRUPTION PHENOTYPE</scope>
</reference>
<reference key="6">
    <citation type="journal article" date="2004" name="J. Biol. Chem.">
        <title>An alternatively spliced isoform of PSD-93/chapsyn 110 binds to the inwardly rectifying potassium channel, Kir2.1.</title>
        <authorList>
            <person name="Leyland M.L."/>
            <person name="Dart C."/>
        </authorList>
    </citation>
    <scope>TISSUE SPECIFICITY</scope>
</reference>
<reference key="7">
    <citation type="journal article" date="2004" name="J. Neurosci.">
        <title>PSD93 regulates synaptic stability at neuronal cholinergic synapses.</title>
        <authorList>
            <person name="Parker M.J."/>
            <person name="Zhao S."/>
            <person name="Bredt D.S."/>
            <person name="Sanes J.R."/>
            <person name="Feng G."/>
        </authorList>
    </citation>
    <scope>ALTERNATIVE SPLICING</scope>
</reference>
<reference key="8">
    <citation type="journal article" date="2006" name="Mol. Cell. Proteomics">
        <title>Comprehensive identification of phosphorylation sites in postsynaptic density preparations.</title>
        <authorList>
            <person name="Trinidad J.C."/>
            <person name="Specht C.G."/>
            <person name="Thalhammer A."/>
            <person name="Schoepfer R."/>
            <person name="Burlingame A.L."/>
        </authorList>
    </citation>
    <scope>PHOSPHORYLATION [LARGE SCALE ANALYSIS] AT SER-28 AND SER-414</scope>
    <scope>IDENTIFICATION BY MASS SPECTROMETRY [LARGE SCALE ANALYSIS]</scope>
    <source>
        <tissue>Brain</tissue>
    </source>
</reference>
<reference key="9">
    <citation type="journal article" date="2008" name="J. Proteome Res.">
        <title>Large-scale identification and evolution indexing of tyrosine phosphorylation sites from murine brain.</title>
        <authorList>
            <person name="Ballif B.A."/>
            <person name="Carey G.R."/>
            <person name="Sunyaev S.R."/>
            <person name="Gygi S.P."/>
        </authorList>
    </citation>
    <scope>PHOSPHORYLATION [LARGE SCALE ANALYSIS] AT TYR-58; SER-65; TYR-505; TYR-732 AND TYR-737</scope>
    <scope>IDENTIFICATION BY MASS SPECTROMETRY [LARGE SCALE ANALYSIS]</scope>
    <source>
        <tissue>Brain</tissue>
    </source>
</reference>
<reference key="10">
    <citation type="journal article" date="2009" name="PLoS Biol.">
        <title>Neto1 is a novel CUB-domain NMDA receptor-interacting protein required for synaptic plasticity and learning.</title>
        <authorList>
            <person name="Ng D."/>
            <person name="Pitcher G.M."/>
            <person name="Szilard R.K."/>
            <person name="Sertie A."/>
            <person name="Kanisek M."/>
            <person name="Clapcote S.J."/>
            <person name="Lipina T."/>
            <person name="Kalia L.V."/>
            <person name="Joo D."/>
            <person name="McKerlie C."/>
            <person name="Cortez M."/>
            <person name="Roder J.C."/>
            <person name="Salter M.W."/>
            <person name="McInnes R.R."/>
        </authorList>
    </citation>
    <scope>INTERACTION WITH NETO1</scope>
</reference>
<reference key="11">
    <citation type="journal article" date="2010" name="Cell">
        <title>A tissue-specific atlas of mouse protein phosphorylation and expression.</title>
        <authorList>
            <person name="Huttlin E.L."/>
            <person name="Jedrychowski M.P."/>
            <person name="Elias J.E."/>
            <person name="Goswami T."/>
            <person name="Rad R."/>
            <person name="Beausoleil S.A."/>
            <person name="Villen J."/>
            <person name="Haas W."/>
            <person name="Sowa M.E."/>
            <person name="Gygi S.P."/>
        </authorList>
    </citation>
    <scope>PHOSPHORYLATION [LARGE SCALE ANALYSIS] AT TYR-58; SER-65; SER-307; SER-328; SER-365 AND SER-553</scope>
    <scope>IDENTIFICATION BY MASS SPECTROMETRY [LARGE SCALE ANALYSIS]</scope>
    <source>
        <tissue>Brain</tissue>
    </source>
</reference>
<reference key="12">
    <citation type="journal article" date="2010" name="J. Neurosci.">
        <title>ADAM22, a Kv1 channel-interacting protein, recruits membrane-associated guanylate kinases to juxtaparanodes of myelinated axons.</title>
        <authorList>
            <person name="Ogawa Y."/>
            <person name="Oses-Prieto J."/>
            <person name="Kim M.Y."/>
            <person name="Horresh I."/>
            <person name="Peles E."/>
            <person name="Burlingame A.L."/>
            <person name="Trimmer J.S."/>
            <person name="Meijer D."/>
            <person name="Rasband M.N."/>
        </authorList>
    </citation>
    <scope>INTERACTION WITH ADAM22</scope>
</reference>
<reference key="13">
    <citation type="journal article" date="2009" name="Acta Crystallogr. F">
        <title>Structure of the first PDZ domain of human PSD-93.</title>
        <authorList>
            <person name="Fiorentini M."/>
            <person name="Nielsen A.K."/>
            <person name="Kristensen O."/>
            <person name="Kastrup J.S."/>
            <person name="Gajhede M."/>
        </authorList>
    </citation>
    <scope>X-RAY CRYSTALLOGRAPHY (2.03 ANGSTROMS) OF 95-188</scope>
</reference>
<feature type="chain" id="PRO_0000094554" description="Disks large homolog 2">
    <location>
        <begin position="1"/>
        <end position="852"/>
    </location>
</feature>
<feature type="domain" description="PDZ 1" evidence="5">
    <location>
        <begin position="98"/>
        <end position="185"/>
    </location>
</feature>
<feature type="domain" description="PDZ 2" evidence="5">
    <location>
        <begin position="193"/>
        <end position="280"/>
    </location>
</feature>
<feature type="domain" description="PDZ 3" evidence="5">
    <location>
        <begin position="421"/>
        <end position="502"/>
    </location>
</feature>
<feature type="domain" description="SH3" evidence="6">
    <location>
        <begin position="536"/>
        <end position="606"/>
    </location>
</feature>
<feature type="domain" description="Guanylate kinase-like" evidence="4">
    <location>
        <begin position="662"/>
        <end position="837"/>
    </location>
</feature>
<feature type="modified residue" description="Phosphoserine" evidence="15">
    <location>
        <position position="28"/>
    </location>
</feature>
<feature type="modified residue" description="Phosphotyrosine" evidence="16 17">
    <location>
        <position position="58"/>
    </location>
</feature>
<feature type="modified residue" description="Phosphoserine" evidence="16 17">
    <location>
        <position position="65"/>
    </location>
</feature>
<feature type="modified residue" description="Phosphoserine" evidence="17">
    <location>
        <position position="307"/>
    </location>
</feature>
<feature type="modified residue" description="Phosphoserine" evidence="17">
    <location>
        <position position="328"/>
    </location>
</feature>
<feature type="modified residue" description="Phosphoserine" evidence="3">
    <location>
        <position position="360"/>
    </location>
</feature>
<feature type="modified residue" description="Phosphoserine" evidence="17">
    <location>
        <position position="365"/>
    </location>
</feature>
<feature type="modified residue" description="Phosphoserine" evidence="3">
    <location>
        <position position="406"/>
    </location>
</feature>
<feature type="modified residue" description="Phosphoserine" evidence="15">
    <location>
        <position position="414"/>
    </location>
</feature>
<feature type="modified residue" description="Phosphotyrosine" evidence="16">
    <location>
        <position position="505"/>
    </location>
</feature>
<feature type="modified residue" description="Phosphoserine" evidence="3">
    <location>
        <position position="528"/>
    </location>
</feature>
<feature type="modified residue" description="Phosphoserine" evidence="3">
    <location>
        <position position="530"/>
    </location>
</feature>
<feature type="modified residue" description="Phosphoserine" evidence="17">
    <location>
        <position position="553"/>
    </location>
</feature>
<feature type="modified residue" description="Phosphotyrosine" evidence="16">
    <location>
        <position position="732"/>
    </location>
</feature>
<feature type="modified residue" description="Phosphotyrosine" evidence="16">
    <location>
        <position position="737"/>
    </location>
</feature>
<feature type="lipid moiety-binding region" description="S-palmitoyl cysteine" evidence="1">
    <location>
        <position position="5"/>
    </location>
</feature>
<feature type="lipid moiety-binding region" description="S-palmitoyl cysteine" evidence="1">
    <location>
        <position position="7"/>
    </location>
</feature>
<feature type="splice variant" id="VSP_012869" description="In isoform 4 and isoform 5." evidence="12">
    <original>MFFACYCALRTNVKKYRYQDEDGPHDHSLPRLTHEVRGPELVHVSEKNLSQIENVHGYVLQSHISPLK</original>
    <variation>MNAYLTKQHSCSRGSDGMDIGRSAPTLIRDAHCACGWQRNAQGLGYSSQTMPSSGPGGPASNRTKLVTLWDSVRKSPHKTSTKGKGNCGERCACPHGWFSPAQ</variation>
    <location>
        <begin position="1"/>
        <end position="68"/>
    </location>
</feature>
<feature type="splice variant" id="VSP_015517" description="In isoform 3." evidence="13">
    <location>
        <begin position="1"/>
        <end position="61"/>
    </location>
</feature>
<feature type="splice variant" id="VSP_015518" description="In isoform 6." evidence="13">
    <location>
        <begin position="1"/>
        <end position="42"/>
    </location>
</feature>
<feature type="splice variant" id="VSP_015519" description="In isoform 7." evidence="13">
    <original>MFFACYCALRTNVK</original>
    <variation>MPVKKKDTDRALSLLEEYCKKLRKPEEQLLKNAVKKVMSIFKSSLFQALLDIQEFYEVTLLNSQKSCEQKIEEANHVAQKWEKTLLLDSCRDSLQKSSEHASCSGPKENALYIEQNKENQCSENETEEKTCQNQGKCPAQNCSVEAPTWMPVHHCT</variation>
    <location>
        <begin position="1"/>
        <end position="14"/>
    </location>
</feature>
<feature type="splice variant" id="VSP_015520" description="In isoform 2." evidence="13">
    <original>MFFACYCALRTNV</original>
    <variation>MICHCKVACTNNTLSLMFGC</variation>
    <location>
        <begin position="1"/>
        <end position="13"/>
    </location>
</feature>
<feature type="splice variant" id="VSP_015521" description="In isoform 6." evidence="13">
    <original>HVSEKNLSQIENVHGYVLQSHISPL</original>
    <variation>MFASIWYAKKLGRRFVHNARKAKSE</variation>
    <location>
        <begin position="43"/>
        <end position="67"/>
    </location>
</feature>
<feature type="splice variant" id="VSP_015522" description="In isoform 3." evidence="13">
    <original>SHISPLK</original>
    <variation>MQHAFIP</variation>
    <location>
        <begin position="62"/>
        <end position="68"/>
    </location>
</feature>
<feature type="splice variant" id="VSP_015523" description="In isoform 7." evidence="13">
    <location>
        <begin position="69"/>
        <end position="86"/>
    </location>
</feature>
<feature type="splice variant" id="VSP_012870" description="In isoform 5." evidence="12">
    <original>S</original>
    <variation>RYCMRFLTSSSPVACVSTRMDGWNSSPPTSLALSTFLVERCSASMVRWEKLRTWLFCSFCCAH</variation>
    <location>
        <position position="394"/>
    </location>
</feature>
<feature type="splice variant" id="VSP_012871" description="In isoform 5." evidence="12">
    <location>
        <begin position="395"/>
        <end position="852"/>
    </location>
</feature>
<feature type="splice variant" id="VSP_015524" description="In isoform 8." evidence="12">
    <original>DQILSVNGIDLRGASHEQAAAALKGAGQTVTIIAQYQPE</original>
    <variation>VINASVNRTGDRRIWHQGNGKAASSVSCLLPALFPNFVL</variation>
    <location>
        <begin position="465"/>
        <end position="503"/>
    </location>
</feature>
<feature type="sequence conflict" description="In Ref. 2; BAC32772." evidence="13" ref="2">
    <original>G</original>
    <variation>S</variation>
    <location>
        <position position="107"/>
    </location>
</feature>
<feature type="sequence conflict" description="In Ref. 1; AAK64496." evidence="13" ref="1">
    <original>D</original>
    <variation>G</variation>
    <location>
        <position position="123"/>
    </location>
</feature>
<feature type="sequence conflict" description="In Ref. 1; AAK64496." evidence="13" ref="1">
    <original>N</original>
    <variation>D</variation>
    <location>
        <position position="213"/>
    </location>
</feature>
<feature type="sequence conflict" description="In Ref. 1; AAK64496." evidence="13" ref="1">
    <original>M</original>
    <variation>T</variation>
    <location>
        <position position="301"/>
    </location>
</feature>
<feature type="sequence conflict" description="In Ref. 1; AAK64496." evidence="13" ref="1">
    <original>S</original>
    <variation>P</variation>
    <location>
        <position position="323"/>
    </location>
</feature>
<feature type="sequence conflict" description="In Ref. 1; AAK64496." evidence="13" ref="1">
    <original>T</original>
    <variation>I</variation>
    <location>
        <position position="585"/>
    </location>
</feature>
<feature type="sequence conflict" description="In Ref. 1; AAK64496." evidence="13" ref="1">
    <original>I</original>
    <variation>T</variation>
    <location>
        <position position="776"/>
    </location>
</feature>
<feature type="strand" evidence="18">
    <location>
        <begin position="94"/>
        <end position="102"/>
    </location>
</feature>
<feature type="turn" evidence="18">
    <location>
        <begin position="104"/>
        <end position="106"/>
    </location>
</feature>
<feature type="strand" evidence="18">
    <location>
        <begin position="110"/>
        <end position="114"/>
    </location>
</feature>
<feature type="strand" evidence="18">
    <location>
        <begin position="127"/>
        <end position="132"/>
    </location>
</feature>
<feature type="helix" evidence="18">
    <location>
        <begin position="137"/>
        <end position="141"/>
    </location>
</feature>
<feature type="strand" evidence="18">
    <location>
        <begin position="149"/>
        <end position="153"/>
    </location>
</feature>
<feature type="helix" evidence="18">
    <location>
        <begin position="163"/>
        <end position="172"/>
    </location>
</feature>
<feature type="strand" evidence="18">
    <location>
        <begin position="175"/>
        <end position="184"/>
    </location>
</feature>
<accession>Q91XM9</accession>
<accession>F8VQM7</accession>
<accession>Q8BXK7</accession>
<accession>Q8BYG5</accession>
<evidence type="ECO:0000250" key="1"/>
<evidence type="ECO:0000250" key="2">
    <source>
        <dbReference type="UniProtKB" id="Q15700"/>
    </source>
</evidence>
<evidence type="ECO:0000250" key="3">
    <source>
        <dbReference type="UniProtKB" id="Q63622"/>
    </source>
</evidence>
<evidence type="ECO:0000255" key="4">
    <source>
        <dbReference type="PROSITE-ProRule" id="PRU00100"/>
    </source>
</evidence>
<evidence type="ECO:0000255" key="5">
    <source>
        <dbReference type="PROSITE-ProRule" id="PRU00143"/>
    </source>
</evidence>
<evidence type="ECO:0000255" key="6">
    <source>
        <dbReference type="PROSITE-ProRule" id="PRU00192"/>
    </source>
</evidence>
<evidence type="ECO:0000269" key="7">
    <source>
    </source>
</evidence>
<evidence type="ECO:0000269" key="8">
    <source>
    </source>
</evidence>
<evidence type="ECO:0000269" key="9">
    <source>
    </source>
</evidence>
<evidence type="ECO:0000269" key="10">
    <source>
    </source>
</evidence>
<evidence type="ECO:0000269" key="11">
    <source>
    </source>
</evidence>
<evidence type="ECO:0000303" key="12">
    <source>
    </source>
</evidence>
<evidence type="ECO:0000305" key="13"/>
<evidence type="ECO:0000305" key="14">
    <source>
    </source>
</evidence>
<evidence type="ECO:0007744" key="15">
    <source>
    </source>
</evidence>
<evidence type="ECO:0007744" key="16">
    <source>
    </source>
</evidence>
<evidence type="ECO:0007744" key="17">
    <source>
    </source>
</evidence>
<evidence type="ECO:0007829" key="18">
    <source>
        <dbReference type="PDB" id="2WL7"/>
    </source>
</evidence>
<dbReference type="EMBL" id="AF388675">
    <property type="protein sequence ID" value="AAK64496.1"/>
    <property type="molecule type" value="mRNA"/>
</dbReference>
<dbReference type="EMBL" id="AK046525">
    <property type="protein sequence ID" value="BAC32772.1"/>
    <property type="molecule type" value="mRNA"/>
</dbReference>
<dbReference type="EMBL" id="AK039754">
    <property type="protein sequence ID" value="BAC30440.1"/>
    <property type="molecule type" value="mRNA"/>
</dbReference>
<dbReference type="EMBL" id="AC100322">
    <property type="status" value="NOT_ANNOTATED_CDS"/>
    <property type="molecule type" value="Genomic_DNA"/>
</dbReference>
<dbReference type="EMBL" id="AC101784">
    <property type="status" value="NOT_ANNOTATED_CDS"/>
    <property type="molecule type" value="Genomic_DNA"/>
</dbReference>
<dbReference type="EMBL" id="AC108818">
    <property type="status" value="NOT_ANNOTATED_CDS"/>
    <property type="molecule type" value="Genomic_DNA"/>
</dbReference>
<dbReference type="EMBL" id="AC108832">
    <property type="status" value="NOT_ANNOTATED_CDS"/>
    <property type="molecule type" value="Genomic_DNA"/>
</dbReference>
<dbReference type="EMBL" id="AC109506">
    <property type="status" value="NOT_ANNOTATED_CDS"/>
    <property type="molecule type" value="Genomic_DNA"/>
</dbReference>
<dbReference type="EMBL" id="AC112262">
    <property type="status" value="NOT_ANNOTATED_CDS"/>
    <property type="molecule type" value="Genomic_DNA"/>
</dbReference>
<dbReference type="EMBL" id="AC118621">
    <property type="status" value="NOT_ANNOTATED_CDS"/>
    <property type="molecule type" value="Genomic_DNA"/>
</dbReference>
<dbReference type="EMBL" id="AC119218">
    <property type="status" value="NOT_ANNOTATED_CDS"/>
    <property type="molecule type" value="Genomic_DNA"/>
</dbReference>
<dbReference type="EMBL" id="AC121261">
    <property type="status" value="NOT_ANNOTATED_CDS"/>
    <property type="molecule type" value="Genomic_DNA"/>
</dbReference>
<dbReference type="EMBL" id="AC122002">
    <property type="status" value="NOT_ANNOTATED_CDS"/>
    <property type="molecule type" value="Genomic_DNA"/>
</dbReference>
<dbReference type="EMBL" id="AC127299">
    <property type="status" value="NOT_ANNOTATED_CDS"/>
    <property type="molecule type" value="Genomic_DNA"/>
</dbReference>
<dbReference type="EMBL" id="AC127683">
    <property type="status" value="NOT_ANNOTATED_CDS"/>
    <property type="molecule type" value="Genomic_DNA"/>
</dbReference>
<dbReference type="EMBL" id="AC140196">
    <property type="status" value="NOT_ANNOTATED_CDS"/>
    <property type="molecule type" value="Genomic_DNA"/>
</dbReference>
<dbReference type="EMBL" id="AC141890">
    <property type="status" value="NOT_ANNOTATED_CDS"/>
    <property type="molecule type" value="Genomic_DNA"/>
</dbReference>
<dbReference type="EMBL" id="AC161490">
    <property type="status" value="NOT_ANNOTATED_CDS"/>
    <property type="molecule type" value="Genomic_DNA"/>
</dbReference>
<dbReference type="EMBL" id="AC162304">
    <property type="status" value="NOT_ANNOTATED_CDS"/>
    <property type="molecule type" value="Genomic_DNA"/>
</dbReference>
<dbReference type="CCDS" id="CCDS40021.1">
    <molecule id="Q91XM9-1"/>
</dbReference>
<dbReference type="RefSeq" id="NP_001229976.1">
    <property type="nucleotide sequence ID" value="NM_001243047.1"/>
</dbReference>
<dbReference type="RefSeq" id="NP_035937.2">
    <molecule id="Q91XM9-1"/>
    <property type="nucleotide sequence ID" value="NM_011807.3"/>
</dbReference>
<dbReference type="RefSeq" id="XP_036008927.1">
    <molecule id="Q91XM9-4"/>
    <property type="nucleotide sequence ID" value="XM_036153034.1"/>
</dbReference>
<dbReference type="RefSeq" id="XP_036008938.1">
    <molecule id="Q91XM9-6"/>
    <property type="nucleotide sequence ID" value="XM_036153045.1"/>
</dbReference>
<dbReference type="PDB" id="2WL7">
    <property type="method" value="X-ray"/>
    <property type="resolution" value="2.03 A"/>
    <property type="chains" value="A=95-188"/>
</dbReference>
<dbReference type="PDBsum" id="2WL7"/>
<dbReference type="SMR" id="Q91XM9"/>
<dbReference type="BioGRID" id="204763">
    <property type="interactions" value="29"/>
</dbReference>
<dbReference type="CORUM" id="Q91XM9"/>
<dbReference type="DIP" id="DIP-31569N"/>
<dbReference type="FunCoup" id="Q91XM9">
    <property type="interactions" value="1352"/>
</dbReference>
<dbReference type="IntAct" id="Q91XM9">
    <property type="interactions" value="22"/>
</dbReference>
<dbReference type="MINT" id="Q91XM9"/>
<dbReference type="STRING" id="10090.ENSMUSP00000102814"/>
<dbReference type="GlyGen" id="Q91XM9">
    <property type="glycosylation" value="5 sites, 2 N-linked glycans (2 sites), 1 O-linked glycan (3 sites)"/>
</dbReference>
<dbReference type="iPTMnet" id="Q91XM9"/>
<dbReference type="PhosphoSitePlus" id="Q91XM9"/>
<dbReference type="SwissPalm" id="Q91XM9"/>
<dbReference type="jPOST" id="Q91XM9"/>
<dbReference type="PaxDb" id="10090-ENSMUSP00000102814"/>
<dbReference type="PeptideAtlas" id="Q91XM9"/>
<dbReference type="ProteomicsDB" id="279675">
    <molecule id="Q91XM9-1"/>
</dbReference>
<dbReference type="ProteomicsDB" id="279676">
    <molecule id="Q91XM9-2"/>
</dbReference>
<dbReference type="ProteomicsDB" id="279677">
    <molecule id="Q91XM9-3"/>
</dbReference>
<dbReference type="ProteomicsDB" id="279678">
    <molecule id="Q91XM9-4"/>
</dbReference>
<dbReference type="ProteomicsDB" id="279679">
    <molecule id="Q91XM9-5"/>
</dbReference>
<dbReference type="ProteomicsDB" id="279680">
    <molecule id="Q91XM9-6"/>
</dbReference>
<dbReference type="ProteomicsDB" id="279681">
    <molecule id="Q91XM9-7"/>
</dbReference>
<dbReference type="ProteomicsDB" id="279682">
    <molecule id="Q91XM9-8"/>
</dbReference>
<dbReference type="ABCD" id="Q91XM9">
    <property type="antibodies" value="11 sequenced antibodies"/>
</dbReference>
<dbReference type="Antibodypedia" id="8247">
    <property type="antibodies" value="337 antibodies from 36 providers"/>
</dbReference>
<dbReference type="DNASU" id="23859"/>
<dbReference type="Ensembl" id="ENSMUST00000107196.10">
    <molecule id="Q91XM9-1"/>
    <property type="protein sequence ID" value="ENSMUSP00000102814.3"/>
    <property type="gene ID" value="ENSMUSG00000052572.20"/>
</dbReference>
<dbReference type="Ensembl" id="ENSMUST00000238619.2">
    <molecule id="Q91XM9-4"/>
    <property type="protein sequence ID" value="ENSMUSP00000158731.2"/>
    <property type="gene ID" value="ENSMUSG00000052572.20"/>
</dbReference>
<dbReference type="GeneID" id="23859"/>
<dbReference type="KEGG" id="mmu:23859"/>
<dbReference type="UCSC" id="uc009ihr.2">
    <molecule id="Q91XM9-1"/>
    <property type="organism name" value="mouse"/>
</dbReference>
<dbReference type="UCSC" id="uc009ihs.1">
    <molecule id="Q91XM9-5"/>
    <property type="organism name" value="mouse"/>
</dbReference>
<dbReference type="AGR" id="MGI:1344351"/>
<dbReference type="CTD" id="1740"/>
<dbReference type="MGI" id="MGI:1344351">
    <property type="gene designation" value="Dlg2"/>
</dbReference>
<dbReference type="VEuPathDB" id="HostDB:ENSMUSG00000052572"/>
<dbReference type="eggNOG" id="KOG0708">
    <property type="taxonomic scope" value="Eukaryota"/>
</dbReference>
<dbReference type="GeneTree" id="ENSGT00940000155156"/>
<dbReference type="HOGENOM" id="CLU_001715_4_2_1"/>
<dbReference type="InParanoid" id="Q91XM9"/>
<dbReference type="TreeFam" id="TF323171"/>
<dbReference type="Reactome" id="R-MMU-438066">
    <property type="pathway name" value="Unblocking of NMDA receptors, glutamate binding and activation"/>
</dbReference>
<dbReference type="Reactome" id="R-MMU-5673001">
    <property type="pathway name" value="RAF/MAP kinase cascade"/>
</dbReference>
<dbReference type="Reactome" id="R-MMU-6794361">
    <property type="pathway name" value="Neurexins and neuroligins"/>
</dbReference>
<dbReference type="BioGRID-ORCS" id="23859">
    <property type="hits" value="1 hit in 77 CRISPR screens"/>
</dbReference>
<dbReference type="CD-CODE" id="CE726F99">
    <property type="entry name" value="Postsynaptic density"/>
</dbReference>
<dbReference type="ChiTaRS" id="Dlg2">
    <property type="organism name" value="mouse"/>
</dbReference>
<dbReference type="EvolutionaryTrace" id="Q91XM9"/>
<dbReference type="PRO" id="PR:Q91XM9"/>
<dbReference type="Proteomes" id="UP000000589">
    <property type="component" value="Chromosome 7"/>
</dbReference>
<dbReference type="RNAct" id="Q91XM9">
    <property type="molecule type" value="protein"/>
</dbReference>
<dbReference type="Bgee" id="ENSMUSG00000052572">
    <property type="expression patterns" value="Expressed in caudate-putamen and 178 other cell types or tissues"/>
</dbReference>
<dbReference type="ExpressionAtlas" id="Q91XM9">
    <property type="expression patterns" value="baseline and differential"/>
</dbReference>
<dbReference type="GO" id="GO:1904115">
    <property type="term" value="C:axon cytoplasm"/>
    <property type="evidence" value="ECO:0007669"/>
    <property type="project" value="GOC"/>
</dbReference>
<dbReference type="GO" id="GO:0043194">
    <property type="term" value="C:axon initial segment"/>
    <property type="evidence" value="ECO:0000314"/>
    <property type="project" value="MGI"/>
</dbReference>
<dbReference type="GO" id="GO:0030054">
    <property type="term" value="C:cell junction"/>
    <property type="evidence" value="ECO:0000314"/>
    <property type="project" value="MGI"/>
</dbReference>
<dbReference type="GO" id="GO:0005737">
    <property type="term" value="C:cytoplasm"/>
    <property type="evidence" value="ECO:0000314"/>
    <property type="project" value="MGI"/>
</dbReference>
<dbReference type="GO" id="GO:0098978">
    <property type="term" value="C:glutamatergic synapse"/>
    <property type="evidence" value="ECO:0000314"/>
    <property type="project" value="SynGO"/>
</dbReference>
<dbReference type="GO" id="GO:0044224">
    <property type="term" value="C:juxtaparanode region of axon"/>
    <property type="evidence" value="ECO:0000314"/>
    <property type="project" value="MGI"/>
</dbReference>
<dbReference type="GO" id="GO:0031594">
    <property type="term" value="C:neuromuscular junction"/>
    <property type="evidence" value="ECO:0007669"/>
    <property type="project" value="InterPro"/>
</dbReference>
<dbReference type="GO" id="GO:0005634">
    <property type="term" value="C:nucleus"/>
    <property type="evidence" value="ECO:0000314"/>
    <property type="project" value="MGI"/>
</dbReference>
<dbReference type="GO" id="GO:0043204">
    <property type="term" value="C:perikaryon"/>
    <property type="evidence" value="ECO:0007669"/>
    <property type="project" value="UniProtKB-SubCell"/>
</dbReference>
<dbReference type="GO" id="GO:0005886">
    <property type="term" value="C:plasma membrane"/>
    <property type="evidence" value="ECO:0000314"/>
    <property type="project" value="MGI"/>
</dbReference>
<dbReference type="GO" id="GO:0014069">
    <property type="term" value="C:postsynaptic density"/>
    <property type="evidence" value="ECO:0000314"/>
    <property type="project" value="ARUK-UCL"/>
</dbReference>
<dbReference type="GO" id="GO:0045211">
    <property type="term" value="C:postsynaptic membrane"/>
    <property type="evidence" value="ECO:0000314"/>
    <property type="project" value="MGI"/>
</dbReference>
<dbReference type="GO" id="GO:0030672">
    <property type="term" value="C:synaptic vesicle membrane"/>
    <property type="evidence" value="ECO:0000314"/>
    <property type="project" value="MGI"/>
</dbReference>
<dbReference type="GO" id="GO:0019900">
    <property type="term" value="F:kinase binding"/>
    <property type="evidence" value="ECO:0000266"/>
    <property type="project" value="MGI"/>
</dbReference>
<dbReference type="GO" id="GO:0098919">
    <property type="term" value="F:structural constituent of postsynaptic density"/>
    <property type="evidence" value="ECO:0000314"/>
    <property type="project" value="SynGO"/>
</dbReference>
<dbReference type="GO" id="GO:0099641">
    <property type="term" value="P:anterograde axonal protein transport"/>
    <property type="evidence" value="ECO:0000316"/>
    <property type="project" value="ARUK-UCL"/>
</dbReference>
<dbReference type="GO" id="GO:0035865">
    <property type="term" value="P:cellular response to potassium ion"/>
    <property type="evidence" value="ECO:0000314"/>
    <property type="project" value="ARUK-UCL"/>
</dbReference>
<dbReference type="GO" id="GO:0007268">
    <property type="term" value="P:chemical synaptic transmission"/>
    <property type="evidence" value="ECO:0000315"/>
    <property type="project" value="MGI"/>
</dbReference>
<dbReference type="GO" id="GO:0045163">
    <property type="term" value="P:clustering of voltage-gated potassium channels"/>
    <property type="evidence" value="ECO:0000314"/>
    <property type="project" value="MGI"/>
</dbReference>
<dbReference type="GO" id="GO:0099645">
    <property type="term" value="P:neurotransmitter receptor localization to postsynaptic specialization membrane"/>
    <property type="evidence" value="ECO:0000314"/>
    <property type="project" value="SynGO"/>
</dbReference>
<dbReference type="GO" id="GO:0099642">
    <property type="term" value="P:retrograde axonal protein transport"/>
    <property type="evidence" value="ECO:0000316"/>
    <property type="project" value="ARUK-UCL"/>
</dbReference>
<dbReference type="GO" id="GO:0019233">
    <property type="term" value="P:sensory perception of pain"/>
    <property type="evidence" value="ECO:0000315"/>
    <property type="project" value="MGI"/>
</dbReference>
<dbReference type="CDD" id="cd00071">
    <property type="entry name" value="GMPK"/>
    <property type="match status" value="1"/>
</dbReference>
<dbReference type="CDD" id="cd06723">
    <property type="entry name" value="PDZ1_Dlg1-2-4-like"/>
    <property type="match status" value="1"/>
</dbReference>
<dbReference type="CDD" id="cd06724">
    <property type="entry name" value="PDZ2_Dlg1-2-4-like"/>
    <property type="match status" value="1"/>
</dbReference>
<dbReference type="CDD" id="cd06795">
    <property type="entry name" value="PDZ3_Dlg1-2-4-like"/>
    <property type="match status" value="1"/>
</dbReference>
<dbReference type="CDD" id="cd12032">
    <property type="entry name" value="SH3_DLG2"/>
    <property type="match status" value="1"/>
</dbReference>
<dbReference type="FunFam" id="3.40.50.300:FF:001402">
    <property type="entry name" value="Discs, large homolog 3 (Drosophila)"/>
    <property type="match status" value="1"/>
</dbReference>
<dbReference type="FunFam" id="2.30.30.40:FF:000008">
    <property type="entry name" value="Disks large homolog 1 isoform 2"/>
    <property type="match status" value="1"/>
</dbReference>
<dbReference type="FunFam" id="2.30.42.10:FF:000001">
    <property type="entry name" value="Disks large homolog 1 isoform 2"/>
    <property type="match status" value="1"/>
</dbReference>
<dbReference type="FunFam" id="3.30.63.10:FF:000001">
    <property type="entry name" value="Disks large homolog 1 isoform 2"/>
    <property type="match status" value="1"/>
</dbReference>
<dbReference type="FunFam" id="2.30.42.10:FF:000091">
    <property type="entry name" value="disks large homolog 1 isoform X8"/>
    <property type="match status" value="1"/>
</dbReference>
<dbReference type="FunFam" id="2.30.30.40:FF:000027">
    <property type="entry name" value="Disks large homolog 3 isoform 1"/>
    <property type="match status" value="1"/>
</dbReference>
<dbReference type="FunFam" id="2.30.42.10:FF:000002">
    <property type="entry name" value="Disks large homolog 4 isoform 2"/>
    <property type="match status" value="1"/>
</dbReference>
<dbReference type="Gene3D" id="2.30.42.10">
    <property type="match status" value="3"/>
</dbReference>
<dbReference type="Gene3D" id="3.30.63.10">
    <property type="entry name" value="Guanylate Kinase phosphate binding domain"/>
    <property type="match status" value="1"/>
</dbReference>
<dbReference type="Gene3D" id="3.40.50.300">
    <property type="entry name" value="P-loop containing nucleotide triphosphate hydrolases"/>
    <property type="match status" value="1"/>
</dbReference>
<dbReference type="Gene3D" id="2.30.30.40">
    <property type="entry name" value="SH3 Domains"/>
    <property type="match status" value="1"/>
</dbReference>
<dbReference type="InterPro" id="IPR019583">
    <property type="entry name" value="DLG1-4_PDZ_assoc"/>
</dbReference>
<dbReference type="InterPro" id="IPR016313">
    <property type="entry name" value="DLG1-like"/>
</dbReference>
<dbReference type="InterPro" id="IPR019590">
    <property type="entry name" value="DLG1_PEST_dom"/>
</dbReference>
<dbReference type="InterPro" id="IPR035759">
    <property type="entry name" value="DLG2_SH3"/>
</dbReference>
<dbReference type="InterPro" id="IPR008145">
    <property type="entry name" value="GK/Ca_channel_bsu"/>
</dbReference>
<dbReference type="InterPro" id="IPR008144">
    <property type="entry name" value="Guanylate_kin-like_dom"/>
</dbReference>
<dbReference type="InterPro" id="IPR020590">
    <property type="entry name" value="Guanylate_kinase_CS"/>
</dbReference>
<dbReference type="InterPro" id="IPR027417">
    <property type="entry name" value="P-loop_NTPase"/>
</dbReference>
<dbReference type="InterPro" id="IPR001478">
    <property type="entry name" value="PDZ"/>
</dbReference>
<dbReference type="InterPro" id="IPR036034">
    <property type="entry name" value="PDZ_sf"/>
</dbReference>
<dbReference type="InterPro" id="IPR036028">
    <property type="entry name" value="SH3-like_dom_sf"/>
</dbReference>
<dbReference type="InterPro" id="IPR001452">
    <property type="entry name" value="SH3_domain"/>
</dbReference>
<dbReference type="InterPro" id="IPR050614">
    <property type="entry name" value="Synaptic_Scaffolding_LAP-MAGUK"/>
</dbReference>
<dbReference type="PANTHER" id="PTHR23119">
    <property type="entry name" value="DISCS LARGE"/>
    <property type="match status" value="1"/>
</dbReference>
<dbReference type="PANTHER" id="PTHR23119:SF6">
    <property type="entry name" value="DISKS LARGE HOMOLOG 2"/>
    <property type="match status" value="1"/>
</dbReference>
<dbReference type="Pfam" id="PF00625">
    <property type="entry name" value="Guanylate_kin"/>
    <property type="match status" value="1"/>
</dbReference>
<dbReference type="Pfam" id="PF10608">
    <property type="entry name" value="MAGUK_N_PEST"/>
    <property type="match status" value="1"/>
</dbReference>
<dbReference type="Pfam" id="PF00595">
    <property type="entry name" value="PDZ"/>
    <property type="match status" value="3"/>
</dbReference>
<dbReference type="Pfam" id="PF10600">
    <property type="entry name" value="PDZ_assoc"/>
    <property type="match status" value="1"/>
</dbReference>
<dbReference type="Pfam" id="PF00018">
    <property type="entry name" value="SH3_1"/>
    <property type="match status" value="1"/>
</dbReference>
<dbReference type="PIRSF" id="PIRSF001741">
    <property type="entry name" value="MAGUK_DLGH"/>
    <property type="match status" value="1"/>
</dbReference>
<dbReference type="SMART" id="SM00072">
    <property type="entry name" value="GuKc"/>
    <property type="match status" value="1"/>
</dbReference>
<dbReference type="SMART" id="SM01277">
    <property type="entry name" value="MAGUK_N_PEST"/>
    <property type="match status" value="1"/>
</dbReference>
<dbReference type="SMART" id="SM00228">
    <property type="entry name" value="PDZ"/>
    <property type="match status" value="3"/>
</dbReference>
<dbReference type="SMART" id="SM00326">
    <property type="entry name" value="SH3"/>
    <property type="match status" value="1"/>
</dbReference>
<dbReference type="SUPFAM" id="SSF52540">
    <property type="entry name" value="P-loop containing nucleoside triphosphate hydrolases"/>
    <property type="match status" value="1"/>
</dbReference>
<dbReference type="SUPFAM" id="SSF50156">
    <property type="entry name" value="PDZ domain-like"/>
    <property type="match status" value="3"/>
</dbReference>
<dbReference type="SUPFAM" id="SSF50044">
    <property type="entry name" value="SH3-domain"/>
    <property type="match status" value="1"/>
</dbReference>
<dbReference type="PROSITE" id="PS00856">
    <property type="entry name" value="GUANYLATE_KINASE_1"/>
    <property type="match status" value="1"/>
</dbReference>
<dbReference type="PROSITE" id="PS50052">
    <property type="entry name" value="GUANYLATE_KINASE_2"/>
    <property type="match status" value="1"/>
</dbReference>
<dbReference type="PROSITE" id="PS50106">
    <property type="entry name" value="PDZ"/>
    <property type="match status" value="3"/>
</dbReference>
<dbReference type="PROSITE" id="PS50002">
    <property type="entry name" value="SH3"/>
    <property type="match status" value="1"/>
</dbReference>